<gene>
    <name evidence="1" type="primary">coaA</name>
    <name type="ordered locus">Sbal223_4071</name>
</gene>
<sequence length="316" mass="36140">MTSKNSIQKALYLAFERLQWSELRDSVPLTLSEQDLENLRGINEKISLSEVTDIYLPLSRLLNLIVKAKQQRGLVVDEFLGQKPSRSPYIISIAGSVAVGKSTTARILQALLRHWPEHPKVDLVTTDGFLYPLADLKRKGLLQRKGFPESYDMKMLVEFISAVKSGQPHVKAPIYSHVTYDRVKNQHQTVSQPDILILEGLNVLQTGLDSPVDTRRPFVSDFVDFSIYVDAEEPLLKQWYKERFLQFRSGAFSDKKSYFHHYSSLTDDEANTIAANIWDTINGPNLQLNIQPTRERAHLILQKGQDHLMSHVLMRK</sequence>
<proteinExistence type="inferred from homology"/>
<name>COAA_SHEB2</name>
<protein>
    <recommendedName>
        <fullName evidence="1">Pantothenate kinase</fullName>
        <ecNumber evidence="1">2.7.1.33</ecNumber>
    </recommendedName>
    <alternativeName>
        <fullName evidence="1">Pantothenic acid kinase</fullName>
    </alternativeName>
</protein>
<comment type="catalytic activity">
    <reaction evidence="1">
        <text>(R)-pantothenate + ATP = (R)-4'-phosphopantothenate + ADP + H(+)</text>
        <dbReference type="Rhea" id="RHEA:16373"/>
        <dbReference type="ChEBI" id="CHEBI:10986"/>
        <dbReference type="ChEBI" id="CHEBI:15378"/>
        <dbReference type="ChEBI" id="CHEBI:29032"/>
        <dbReference type="ChEBI" id="CHEBI:30616"/>
        <dbReference type="ChEBI" id="CHEBI:456216"/>
        <dbReference type="EC" id="2.7.1.33"/>
    </reaction>
</comment>
<comment type="pathway">
    <text evidence="1">Cofactor biosynthesis; coenzyme A biosynthesis; CoA from (R)-pantothenate: step 1/5.</text>
</comment>
<comment type="subcellular location">
    <subcellularLocation>
        <location evidence="1">Cytoplasm</location>
    </subcellularLocation>
</comment>
<comment type="similarity">
    <text evidence="1">Belongs to the prokaryotic pantothenate kinase family.</text>
</comment>
<evidence type="ECO:0000255" key="1">
    <source>
        <dbReference type="HAMAP-Rule" id="MF_00215"/>
    </source>
</evidence>
<keyword id="KW-0067">ATP-binding</keyword>
<keyword id="KW-0173">Coenzyme A biosynthesis</keyword>
<keyword id="KW-0963">Cytoplasm</keyword>
<keyword id="KW-0418">Kinase</keyword>
<keyword id="KW-0547">Nucleotide-binding</keyword>
<keyword id="KW-0808">Transferase</keyword>
<reference key="1">
    <citation type="submission" date="2008-12" db="EMBL/GenBank/DDBJ databases">
        <title>Complete sequence of chromosome of Shewanella baltica OS223.</title>
        <authorList>
            <consortium name="US DOE Joint Genome Institute"/>
            <person name="Lucas S."/>
            <person name="Copeland A."/>
            <person name="Lapidus A."/>
            <person name="Glavina del Rio T."/>
            <person name="Dalin E."/>
            <person name="Tice H."/>
            <person name="Bruce D."/>
            <person name="Goodwin L."/>
            <person name="Pitluck S."/>
            <person name="Chertkov O."/>
            <person name="Meincke L."/>
            <person name="Brettin T."/>
            <person name="Detter J.C."/>
            <person name="Han C."/>
            <person name="Kuske C.R."/>
            <person name="Larimer F."/>
            <person name="Land M."/>
            <person name="Hauser L."/>
            <person name="Kyrpides N."/>
            <person name="Ovchinnikova G."/>
            <person name="Brettar I."/>
            <person name="Rodrigues J."/>
            <person name="Konstantinidis K."/>
            <person name="Tiedje J."/>
        </authorList>
    </citation>
    <scope>NUCLEOTIDE SEQUENCE [LARGE SCALE GENOMIC DNA]</scope>
    <source>
        <strain>OS223</strain>
    </source>
</reference>
<feature type="chain" id="PRO_1000124806" description="Pantothenate kinase">
    <location>
        <begin position="1"/>
        <end position="316"/>
    </location>
</feature>
<feature type="binding site" evidence="1">
    <location>
        <begin position="95"/>
        <end position="102"/>
    </location>
    <ligand>
        <name>ATP</name>
        <dbReference type="ChEBI" id="CHEBI:30616"/>
    </ligand>
</feature>
<accession>B8EBM0</accession>
<dbReference type="EC" id="2.7.1.33" evidence="1"/>
<dbReference type="EMBL" id="CP001252">
    <property type="protein sequence ID" value="ACK48544.1"/>
    <property type="molecule type" value="Genomic_DNA"/>
</dbReference>
<dbReference type="RefSeq" id="WP_011848150.1">
    <property type="nucleotide sequence ID" value="NC_011663.1"/>
</dbReference>
<dbReference type="SMR" id="B8EBM0"/>
<dbReference type="KEGG" id="sbp:Sbal223_4071"/>
<dbReference type="HOGENOM" id="CLU_053818_1_1_6"/>
<dbReference type="UniPathway" id="UPA00241">
    <property type="reaction ID" value="UER00352"/>
</dbReference>
<dbReference type="Proteomes" id="UP000002507">
    <property type="component" value="Chromosome"/>
</dbReference>
<dbReference type="GO" id="GO:0005737">
    <property type="term" value="C:cytoplasm"/>
    <property type="evidence" value="ECO:0007669"/>
    <property type="project" value="UniProtKB-SubCell"/>
</dbReference>
<dbReference type="GO" id="GO:0005524">
    <property type="term" value="F:ATP binding"/>
    <property type="evidence" value="ECO:0007669"/>
    <property type="project" value="UniProtKB-UniRule"/>
</dbReference>
<dbReference type="GO" id="GO:0004594">
    <property type="term" value="F:pantothenate kinase activity"/>
    <property type="evidence" value="ECO:0007669"/>
    <property type="project" value="UniProtKB-UniRule"/>
</dbReference>
<dbReference type="GO" id="GO:0015937">
    <property type="term" value="P:coenzyme A biosynthetic process"/>
    <property type="evidence" value="ECO:0007669"/>
    <property type="project" value="UniProtKB-UniRule"/>
</dbReference>
<dbReference type="CDD" id="cd02025">
    <property type="entry name" value="PanK"/>
    <property type="match status" value="1"/>
</dbReference>
<dbReference type="FunFam" id="3.40.50.300:FF:000242">
    <property type="entry name" value="Pantothenate kinase"/>
    <property type="match status" value="1"/>
</dbReference>
<dbReference type="Gene3D" id="3.40.50.300">
    <property type="entry name" value="P-loop containing nucleotide triphosphate hydrolases"/>
    <property type="match status" value="1"/>
</dbReference>
<dbReference type="HAMAP" id="MF_00215">
    <property type="entry name" value="Pantothen_kinase_1"/>
    <property type="match status" value="1"/>
</dbReference>
<dbReference type="InterPro" id="IPR027417">
    <property type="entry name" value="P-loop_NTPase"/>
</dbReference>
<dbReference type="InterPro" id="IPR004566">
    <property type="entry name" value="PanK"/>
</dbReference>
<dbReference type="InterPro" id="IPR006083">
    <property type="entry name" value="PRK/URK"/>
</dbReference>
<dbReference type="NCBIfam" id="TIGR00554">
    <property type="entry name" value="panK_bact"/>
    <property type="match status" value="1"/>
</dbReference>
<dbReference type="PANTHER" id="PTHR10285">
    <property type="entry name" value="URIDINE KINASE"/>
    <property type="match status" value="1"/>
</dbReference>
<dbReference type="Pfam" id="PF00485">
    <property type="entry name" value="PRK"/>
    <property type="match status" value="1"/>
</dbReference>
<dbReference type="PIRSF" id="PIRSF000545">
    <property type="entry name" value="Pantothenate_kin"/>
    <property type="match status" value="1"/>
</dbReference>
<dbReference type="SUPFAM" id="SSF52540">
    <property type="entry name" value="P-loop containing nucleoside triphosphate hydrolases"/>
    <property type="match status" value="1"/>
</dbReference>
<organism>
    <name type="scientific">Shewanella baltica (strain OS223)</name>
    <dbReference type="NCBI Taxonomy" id="407976"/>
    <lineage>
        <taxon>Bacteria</taxon>
        <taxon>Pseudomonadati</taxon>
        <taxon>Pseudomonadota</taxon>
        <taxon>Gammaproteobacteria</taxon>
        <taxon>Alteromonadales</taxon>
        <taxon>Shewanellaceae</taxon>
        <taxon>Shewanella</taxon>
    </lineage>
</organism>